<comment type="subcellular location">
    <subcellularLocation>
        <location evidence="1">Cytoplasm</location>
    </subcellularLocation>
</comment>
<comment type="similarity">
    <text evidence="1">Belongs to the UPF0291 family.</text>
</comment>
<name>Y985_LACE2</name>
<proteinExistence type="inferred from homology"/>
<gene>
    <name type="ordered locus">EUBELI_00985</name>
</gene>
<dbReference type="EMBL" id="CP001104">
    <property type="protein sequence ID" value="ACR71986.1"/>
    <property type="molecule type" value="Genomic_DNA"/>
</dbReference>
<dbReference type="RefSeq" id="WP_012739221.1">
    <property type="nucleotide sequence ID" value="NC_012778.1"/>
</dbReference>
<dbReference type="SMR" id="C4Z073"/>
<dbReference type="STRING" id="515620.EUBELI_00985"/>
<dbReference type="GeneID" id="41355713"/>
<dbReference type="KEGG" id="eel:EUBELI_00985"/>
<dbReference type="eggNOG" id="COG4224">
    <property type="taxonomic scope" value="Bacteria"/>
</dbReference>
<dbReference type="HOGENOM" id="CLU_173137_0_2_9"/>
<dbReference type="Proteomes" id="UP000001476">
    <property type="component" value="Chromosome"/>
</dbReference>
<dbReference type="GO" id="GO:0005737">
    <property type="term" value="C:cytoplasm"/>
    <property type="evidence" value="ECO:0007669"/>
    <property type="project" value="UniProtKB-SubCell"/>
</dbReference>
<dbReference type="Gene3D" id="1.10.287.540">
    <property type="entry name" value="Helix hairpin bin"/>
    <property type="match status" value="1"/>
</dbReference>
<dbReference type="HAMAP" id="MF_01103">
    <property type="entry name" value="UPF0291"/>
    <property type="match status" value="1"/>
</dbReference>
<dbReference type="InterPro" id="IPR009242">
    <property type="entry name" value="DUF896"/>
</dbReference>
<dbReference type="PANTHER" id="PTHR37300:SF2">
    <property type="entry name" value="UPF0291 PROTEIN BC_1827"/>
    <property type="match status" value="1"/>
</dbReference>
<dbReference type="PANTHER" id="PTHR37300">
    <property type="entry name" value="UPF0291 PROTEIN CBO2609/CLC_2481"/>
    <property type="match status" value="1"/>
</dbReference>
<dbReference type="Pfam" id="PF05979">
    <property type="entry name" value="DUF896"/>
    <property type="match status" value="1"/>
</dbReference>
<dbReference type="SUPFAM" id="SSF158221">
    <property type="entry name" value="YnzC-like"/>
    <property type="match status" value="1"/>
</dbReference>
<keyword id="KW-0963">Cytoplasm</keyword>
<keyword id="KW-1185">Reference proteome</keyword>
<organism>
    <name type="scientific">Lachnospira eligens (strain ATCC 27750 / DSM 3376 / VPI C15-48 / C15-B4)</name>
    <name type="common">Eubacterium eligens</name>
    <dbReference type="NCBI Taxonomy" id="515620"/>
    <lineage>
        <taxon>Bacteria</taxon>
        <taxon>Bacillati</taxon>
        <taxon>Bacillota</taxon>
        <taxon>Clostridia</taxon>
        <taxon>Lachnospirales</taxon>
        <taxon>Lachnospiraceae</taxon>
        <taxon>Lachnospira</taxon>
    </lineage>
</organism>
<feature type="chain" id="PRO_1000213549" description="UPF0291 protein EUBELI_00985">
    <location>
        <begin position="1"/>
        <end position="84"/>
    </location>
</feature>
<reference key="1">
    <citation type="journal article" date="2009" name="Proc. Natl. Acad. Sci. U.S.A.">
        <title>Characterizing a model human gut microbiota composed of members of its two dominant bacterial phyla.</title>
        <authorList>
            <person name="Mahowald M.A."/>
            <person name="Rey F.E."/>
            <person name="Seedorf H."/>
            <person name="Turnbaugh P.J."/>
            <person name="Fulton R.S."/>
            <person name="Wollam A."/>
            <person name="Shah N."/>
            <person name="Wang C."/>
            <person name="Magrini V."/>
            <person name="Wilson R.K."/>
            <person name="Cantarel B.L."/>
            <person name="Coutinho P.M."/>
            <person name="Henrissat B."/>
            <person name="Crock L.W."/>
            <person name="Russell A."/>
            <person name="Verberkmoes N.C."/>
            <person name="Hettich R.L."/>
            <person name="Gordon J.I."/>
        </authorList>
    </citation>
    <scope>NUCLEOTIDE SEQUENCE [LARGE SCALE GENOMIC DNA]</scope>
    <source>
        <strain>ATCC 27750 / DSM 3376 / VPI C15-48 / C15-B4</strain>
    </source>
</reference>
<evidence type="ECO:0000255" key="1">
    <source>
        <dbReference type="HAMAP-Rule" id="MF_01103"/>
    </source>
</evidence>
<protein>
    <recommendedName>
        <fullName evidence="1">UPF0291 protein EUBELI_00985</fullName>
    </recommendedName>
</protein>
<accession>C4Z073</accession>
<sequence length="84" mass="9696">MVTEKTLERINELYHKSKAEGLTDAELAEQKQLRADYVKAFRENLRGQLESIKIKNPDGSLIDVKARHDEKMKRLAEEQAEKGN</sequence>